<name>SMOC1_HUMAN</name>
<accession>Q9H4F8</accession>
<accession>A8K1S3</accession>
<accession>B2R7P5</accession>
<accession>Q96F78</accession>
<dbReference type="EMBL" id="AJ249900">
    <property type="protein sequence ID" value="CAC10352.1"/>
    <property type="molecule type" value="mRNA"/>
</dbReference>
<dbReference type="EMBL" id="AK289988">
    <property type="protein sequence ID" value="BAF82677.1"/>
    <property type="molecule type" value="mRNA"/>
</dbReference>
<dbReference type="EMBL" id="AK313063">
    <property type="protein sequence ID" value="BAG35892.1"/>
    <property type="molecule type" value="mRNA"/>
</dbReference>
<dbReference type="EMBL" id="AL135747">
    <property type="status" value="NOT_ANNOTATED_CDS"/>
    <property type="molecule type" value="Genomic_DNA"/>
</dbReference>
<dbReference type="EMBL" id="AL157789">
    <property type="status" value="NOT_ANNOTATED_CDS"/>
    <property type="molecule type" value="Genomic_DNA"/>
</dbReference>
<dbReference type="EMBL" id="CH471061">
    <property type="protein sequence ID" value="EAW81013.1"/>
    <property type="molecule type" value="Genomic_DNA"/>
</dbReference>
<dbReference type="EMBL" id="CH471061">
    <property type="protein sequence ID" value="EAW81014.1"/>
    <property type="molecule type" value="Genomic_DNA"/>
</dbReference>
<dbReference type="EMBL" id="BC008608">
    <property type="protein sequence ID" value="AAH08608.1"/>
    <property type="molecule type" value="mRNA"/>
</dbReference>
<dbReference type="EMBL" id="BC011548">
    <property type="protein sequence ID" value="AAH11548.1"/>
    <property type="molecule type" value="mRNA"/>
</dbReference>
<dbReference type="CCDS" id="CCDS32110.1">
    <molecule id="Q9H4F8-2"/>
</dbReference>
<dbReference type="CCDS" id="CCDS9798.1">
    <molecule id="Q9H4F8-1"/>
</dbReference>
<dbReference type="RefSeq" id="NP_001030024.1">
    <molecule id="Q9H4F8-2"/>
    <property type="nucleotide sequence ID" value="NM_001034852.3"/>
</dbReference>
<dbReference type="RefSeq" id="NP_071420.1">
    <molecule id="Q9H4F8-1"/>
    <property type="nucleotide sequence ID" value="NM_022137.6"/>
</dbReference>
<dbReference type="BioGRID" id="122055">
    <property type="interactions" value="61"/>
</dbReference>
<dbReference type="FunCoup" id="Q9H4F8">
    <property type="interactions" value="570"/>
</dbReference>
<dbReference type="IntAct" id="Q9H4F8">
    <property type="interactions" value="48"/>
</dbReference>
<dbReference type="MINT" id="Q9H4F8"/>
<dbReference type="STRING" id="9606.ENSP00000355110"/>
<dbReference type="GlyCosmos" id="Q9H4F8">
    <property type="glycosylation" value="4 sites, 2 glycans"/>
</dbReference>
<dbReference type="GlyGen" id="Q9H4F8">
    <property type="glycosylation" value="14 sites, 6 N-linked glycans (2 sites), 3 O-linked glycans (10 sites)"/>
</dbReference>
<dbReference type="iPTMnet" id="Q9H4F8"/>
<dbReference type="PhosphoSitePlus" id="Q9H4F8"/>
<dbReference type="BioMuta" id="SMOC1"/>
<dbReference type="DMDM" id="38258649"/>
<dbReference type="jPOST" id="Q9H4F8"/>
<dbReference type="MassIVE" id="Q9H4F8"/>
<dbReference type="PaxDb" id="9606-ENSP00000355110"/>
<dbReference type="PeptideAtlas" id="Q9H4F8"/>
<dbReference type="ProteomicsDB" id="80829">
    <molecule id="Q9H4F8-1"/>
</dbReference>
<dbReference type="ProteomicsDB" id="80830">
    <molecule id="Q9H4F8-2"/>
</dbReference>
<dbReference type="Pumba" id="Q9H4F8"/>
<dbReference type="Antibodypedia" id="125">
    <property type="antibodies" value="127 antibodies from 23 providers"/>
</dbReference>
<dbReference type="DNASU" id="64093"/>
<dbReference type="YCharOS" id="Q9H4F8">
    <property type="antibodies" value="Tested 8 antibodies from 5 manufacturers"/>
</dbReference>
<dbReference type="Ensembl" id="ENST00000361956.8">
    <molecule id="Q9H4F8-2"/>
    <property type="protein sequence ID" value="ENSP00000355110.4"/>
    <property type="gene ID" value="ENSG00000198732.11"/>
</dbReference>
<dbReference type="Ensembl" id="ENST00000381280.4">
    <molecule id="Q9H4F8-1"/>
    <property type="protein sequence ID" value="ENSP00000370680.4"/>
    <property type="gene ID" value="ENSG00000198732.11"/>
</dbReference>
<dbReference type="GeneID" id="64093"/>
<dbReference type="KEGG" id="hsa:64093"/>
<dbReference type="MANE-Select" id="ENST00000361956.8">
    <molecule id="Q9H4F8-2"/>
    <property type="protein sequence ID" value="ENSP00000355110.4"/>
    <property type="RefSeq nucleotide sequence ID" value="NM_001034852.3"/>
    <property type="RefSeq protein sequence ID" value="NP_001030024.1"/>
</dbReference>
<dbReference type="UCSC" id="uc001xls.3">
    <molecule id="Q9H4F8-1"/>
    <property type="organism name" value="human"/>
</dbReference>
<dbReference type="AGR" id="HGNC:20318"/>
<dbReference type="CTD" id="64093"/>
<dbReference type="DisGeNET" id="64093"/>
<dbReference type="GeneCards" id="SMOC1"/>
<dbReference type="HGNC" id="HGNC:20318">
    <property type="gene designation" value="SMOC1"/>
</dbReference>
<dbReference type="HPA" id="ENSG00000198732">
    <property type="expression patterns" value="Tissue enhanced (brain, liver)"/>
</dbReference>
<dbReference type="MalaCards" id="SMOC1"/>
<dbReference type="MIM" id="206920">
    <property type="type" value="phenotype"/>
</dbReference>
<dbReference type="MIM" id="608488">
    <property type="type" value="gene"/>
</dbReference>
<dbReference type="neXtProt" id="NX_Q9H4F8"/>
<dbReference type="OpenTargets" id="ENSG00000198732"/>
<dbReference type="Orphanet" id="1106">
    <property type="disease" value="Microphthalmia with limb anomalies"/>
</dbReference>
<dbReference type="PharmGKB" id="PA134942329"/>
<dbReference type="VEuPathDB" id="HostDB:ENSG00000198732"/>
<dbReference type="eggNOG" id="KOG4578">
    <property type="taxonomic scope" value="Eukaryota"/>
</dbReference>
<dbReference type="GeneTree" id="ENSGT00390000018436"/>
<dbReference type="HOGENOM" id="CLU_023483_0_0_1"/>
<dbReference type="InParanoid" id="Q9H4F8"/>
<dbReference type="OMA" id="GERDNHC"/>
<dbReference type="OrthoDB" id="5986054at2759"/>
<dbReference type="PAN-GO" id="Q9H4F8">
    <property type="GO annotations" value="5 GO annotations based on evolutionary models"/>
</dbReference>
<dbReference type="PhylomeDB" id="Q9H4F8"/>
<dbReference type="TreeFam" id="TF320666"/>
<dbReference type="PathwayCommons" id="Q9H4F8"/>
<dbReference type="SignaLink" id="Q9H4F8"/>
<dbReference type="SIGNOR" id="Q9H4F8"/>
<dbReference type="BioGRID-ORCS" id="64093">
    <property type="hits" value="6 hits in 1158 CRISPR screens"/>
</dbReference>
<dbReference type="ChiTaRS" id="SMOC1">
    <property type="organism name" value="human"/>
</dbReference>
<dbReference type="GenomeRNAi" id="64093"/>
<dbReference type="Pharos" id="Q9H4F8">
    <property type="development level" value="Tbio"/>
</dbReference>
<dbReference type="PRO" id="PR:Q9H4F8"/>
<dbReference type="Proteomes" id="UP000005640">
    <property type="component" value="Chromosome 14"/>
</dbReference>
<dbReference type="RNAct" id="Q9H4F8">
    <property type="molecule type" value="protein"/>
</dbReference>
<dbReference type="Bgee" id="ENSG00000198732">
    <property type="expression patterns" value="Expressed in ganglionic eminence and 155 other cell types or tissues"/>
</dbReference>
<dbReference type="ExpressionAtlas" id="Q9H4F8">
    <property type="expression patterns" value="baseline and differential"/>
</dbReference>
<dbReference type="GO" id="GO:0005604">
    <property type="term" value="C:basement membrane"/>
    <property type="evidence" value="ECO:0000318"/>
    <property type="project" value="GO_Central"/>
</dbReference>
<dbReference type="GO" id="GO:0005615">
    <property type="term" value="C:extracellular space"/>
    <property type="evidence" value="ECO:0000318"/>
    <property type="project" value="GO_Central"/>
</dbReference>
<dbReference type="GO" id="GO:0005509">
    <property type="term" value="F:calcium ion binding"/>
    <property type="evidence" value="ECO:0007669"/>
    <property type="project" value="InterPro"/>
</dbReference>
<dbReference type="GO" id="GO:0050840">
    <property type="term" value="F:extracellular matrix binding"/>
    <property type="evidence" value="ECO:0000318"/>
    <property type="project" value="GO_Central"/>
</dbReference>
<dbReference type="GO" id="GO:0008201">
    <property type="term" value="F:heparin binding"/>
    <property type="evidence" value="ECO:0000318"/>
    <property type="project" value="GO_Central"/>
</dbReference>
<dbReference type="GO" id="GO:0030154">
    <property type="term" value="P:cell differentiation"/>
    <property type="evidence" value="ECO:0007669"/>
    <property type="project" value="UniProtKB-KW"/>
</dbReference>
<dbReference type="GO" id="GO:0030198">
    <property type="term" value="P:extracellular matrix organization"/>
    <property type="evidence" value="ECO:0000318"/>
    <property type="project" value="GO_Central"/>
</dbReference>
<dbReference type="GO" id="GO:0001654">
    <property type="term" value="P:eye development"/>
    <property type="evidence" value="ECO:0000315"/>
    <property type="project" value="UniProtKB"/>
</dbReference>
<dbReference type="GO" id="GO:0060173">
    <property type="term" value="P:limb development"/>
    <property type="evidence" value="ECO:0000315"/>
    <property type="project" value="UniProtKB"/>
</dbReference>
<dbReference type="GO" id="GO:0045667">
    <property type="term" value="P:regulation of osteoblast differentiation"/>
    <property type="evidence" value="ECO:0000315"/>
    <property type="project" value="UniProtKB"/>
</dbReference>
<dbReference type="CDD" id="cd16240">
    <property type="entry name" value="EFh_SPARC_SMOC1"/>
    <property type="match status" value="1"/>
</dbReference>
<dbReference type="CDD" id="cd00104">
    <property type="entry name" value="KAZAL_FS"/>
    <property type="match status" value="1"/>
</dbReference>
<dbReference type="CDD" id="cd00191">
    <property type="entry name" value="TY"/>
    <property type="match status" value="2"/>
</dbReference>
<dbReference type="FunFam" id="1.10.238.10:FF:000076">
    <property type="entry name" value="SPARC-related modular calcium binding protein 1"/>
    <property type="match status" value="1"/>
</dbReference>
<dbReference type="FunFam" id="3.30.60.30:FF:000012">
    <property type="entry name" value="SPARC-related modular calcium binding protein 1"/>
    <property type="match status" value="1"/>
</dbReference>
<dbReference type="FunFam" id="4.10.800.10:FF:000004">
    <property type="entry name" value="SPARC-related modular calcium-binding protein 1"/>
    <property type="match status" value="1"/>
</dbReference>
<dbReference type="FunFam" id="4.10.800.10:FF:000003">
    <property type="entry name" value="SPARC-related modular calcium-binding protein 2 isoform 1"/>
    <property type="match status" value="1"/>
</dbReference>
<dbReference type="Gene3D" id="3.30.60.30">
    <property type="match status" value="1"/>
</dbReference>
<dbReference type="Gene3D" id="1.10.238.10">
    <property type="entry name" value="EF-hand"/>
    <property type="match status" value="1"/>
</dbReference>
<dbReference type="Gene3D" id="4.10.800.10">
    <property type="entry name" value="Thyroglobulin type-1"/>
    <property type="match status" value="2"/>
</dbReference>
<dbReference type="InterPro" id="IPR051950">
    <property type="entry name" value="Dev_reg/Prot_inhib"/>
</dbReference>
<dbReference type="InterPro" id="IPR011992">
    <property type="entry name" value="EF-hand-dom_pair"/>
</dbReference>
<dbReference type="InterPro" id="IPR018247">
    <property type="entry name" value="EF_Hand_1_Ca_BS"/>
</dbReference>
<dbReference type="InterPro" id="IPR002350">
    <property type="entry name" value="Kazal_dom"/>
</dbReference>
<dbReference type="InterPro" id="IPR036058">
    <property type="entry name" value="Kazal_dom_sf"/>
</dbReference>
<dbReference type="InterPro" id="IPR037639">
    <property type="entry name" value="SMOC1_EC"/>
</dbReference>
<dbReference type="InterPro" id="IPR019577">
    <property type="entry name" value="SPARC/Testican_Ca-bd-dom"/>
</dbReference>
<dbReference type="InterPro" id="IPR000716">
    <property type="entry name" value="Thyroglobulin_1"/>
</dbReference>
<dbReference type="InterPro" id="IPR036857">
    <property type="entry name" value="Thyroglobulin_1_sf"/>
</dbReference>
<dbReference type="PANTHER" id="PTHR12352">
    <property type="entry name" value="SECRETED MODULAR CALCIUM-BINDING PROTEIN"/>
    <property type="match status" value="1"/>
</dbReference>
<dbReference type="PANTHER" id="PTHR12352:SF13">
    <property type="entry name" value="SPARC-RELATED MODULAR CALCIUM-BINDING PROTEIN 1"/>
    <property type="match status" value="1"/>
</dbReference>
<dbReference type="Pfam" id="PF07648">
    <property type="entry name" value="Kazal_2"/>
    <property type="match status" value="1"/>
</dbReference>
<dbReference type="Pfam" id="PF10591">
    <property type="entry name" value="SPARC_Ca_bdg"/>
    <property type="match status" value="1"/>
</dbReference>
<dbReference type="Pfam" id="PF16597">
    <property type="entry name" value="Thyroglob_assoc"/>
    <property type="match status" value="1"/>
</dbReference>
<dbReference type="Pfam" id="PF00086">
    <property type="entry name" value="Thyroglobulin_1"/>
    <property type="match status" value="2"/>
</dbReference>
<dbReference type="SMART" id="SM00280">
    <property type="entry name" value="KAZAL"/>
    <property type="match status" value="1"/>
</dbReference>
<dbReference type="SMART" id="SM00211">
    <property type="entry name" value="TY"/>
    <property type="match status" value="2"/>
</dbReference>
<dbReference type="SUPFAM" id="SSF47473">
    <property type="entry name" value="EF-hand"/>
    <property type="match status" value="1"/>
</dbReference>
<dbReference type="SUPFAM" id="SSF100895">
    <property type="entry name" value="Kazal-type serine protease inhibitors"/>
    <property type="match status" value="1"/>
</dbReference>
<dbReference type="SUPFAM" id="SSF57610">
    <property type="entry name" value="Thyroglobulin type-1 domain"/>
    <property type="match status" value="2"/>
</dbReference>
<dbReference type="PROSITE" id="PS00018">
    <property type="entry name" value="EF_HAND_1"/>
    <property type="match status" value="2"/>
</dbReference>
<dbReference type="PROSITE" id="PS51465">
    <property type="entry name" value="KAZAL_2"/>
    <property type="match status" value="1"/>
</dbReference>
<dbReference type="PROSITE" id="PS00484">
    <property type="entry name" value="THYROGLOBULIN_1_1"/>
    <property type="match status" value="2"/>
</dbReference>
<dbReference type="PROSITE" id="PS51162">
    <property type="entry name" value="THYROGLOBULIN_1_2"/>
    <property type="match status" value="2"/>
</dbReference>
<comment type="function">
    <text evidence="8 9 10">Plays essential roles in both eye and limb development. Probable regulator of osteoblast differentiation.</text>
</comment>
<comment type="interaction">
    <interactant intactId="EBI-2801103">
        <id>Q9H4F8</id>
    </interactant>
    <interactant intactId="EBI-10171774">
        <id>P60410</id>
        <label>KRTAP10-8</label>
    </interactant>
    <organismsDiffer>false</organismsDiffer>
    <experiments>3</experiments>
</comment>
<comment type="interaction">
    <interactant intactId="EBI-2801103">
        <id>Q9H4F8</id>
    </interactant>
    <interactant intactId="EBI-945833">
        <id>Q7Z3S9</id>
        <label>NOTCH2NLA</label>
    </interactant>
    <organismsDiffer>false</organismsDiffer>
    <experiments>4</experiments>
</comment>
<comment type="interaction">
    <interactant intactId="EBI-2801103">
        <id>Q9H4F8</id>
    </interactant>
    <interactant intactId="EBI-533224">
        <id>P15884</id>
        <label>TCF4</label>
    </interactant>
    <organismsDiffer>false</organismsDiffer>
    <experiments>3</experiments>
</comment>
<comment type="interaction">
    <interactant intactId="EBI-2801103">
        <id>Q9H4F8</id>
    </interactant>
    <interactant intactId="EBI-3957603">
        <id>P09022</id>
        <label>Hoxa1</label>
    </interactant>
    <organismsDiffer>true</organismsDiffer>
    <experiments>2</experiments>
</comment>
<comment type="interaction">
    <interactant intactId="EBI-12162539">
        <id>Q9H4F8-2</id>
    </interactant>
    <interactant intactId="EBI-3867333">
        <id>A8MQ03</id>
        <label>CYSRT1</label>
    </interactant>
    <organismsDiffer>false</organismsDiffer>
    <experiments>3</experiments>
</comment>
<comment type="interaction">
    <interactant intactId="EBI-12162539">
        <id>Q9H4F8-2</id>
    </interactant>
    <interactant intactId="EBI-11959885">
        <id>Q07627</id>
        <label>KRTAP1-1</label>
    </interactant>
    <organismsDiffer>false</organismsDiffer>
    <experiments>3</experiments>
</comment>
<comment type="interaction">
    <interactant intactId="EBI-12162539">
        <id>Q9H4F8-2</id>
    </interactant>
    <interactant intactId="EBI-13644623">
        <id>Q92570</id>
        <label>NR4A3</label>
    </interactant>
    <organismsDiffer>false</organismsDiffer>
    <experiments>3</experiments>
</comment>
<comment type="interaction">
    <interactant intactId="EBI-12162539">
        <id>Q9H4F8-2</id>
    </interactant>
    <interactant intactId="EBI-11957216">
        <id>A8MV65-2</id>
        <label>VGLL3</label>
    </interactant>
    <organismsDiffer>false</organismsDiffer>
    <experiments>3</experiments>
</comment>
<comment type="subcellular location">
    <subcellularLocation>
        <location evidence="7 8">Secreted</location>
        <location evidence="7 8">Extracellular space</location>
        <location evidence="7 8">Extracellular matrix</location>
        <location evidence="7 8">Basement membrane</location>
    </subcellularLocation>
    <text>In or around the basement membrane.</text>
</comment>
<comment type="alternative products">
    <event type="alternative splicing"/>
    <isoform>
        <id>Q9H4F8-1</id>
        <name>1</name>
        <sequence type="displayed"/>
    </isoform>
    <isoform>
        <id>Q9H4F8-2</id>
        <name>2</name>
        <sequence type="described" ref="VSP_008720"/>
    </isoform>
</comment>
<comment type="tissue specificity">
    <text evidence="7">Widely expressed in many tissues with a strongest signal in ovary. No expression in spleen.</text>
</comment>
<comment type="PTM">
    <text evidence="7">Glycosylated.</text>
</comment>
<comment type="disease" evidence="9 10 11 12">
    <disease id="DI-03004">
        <name>Ophthalmoacromelic syndrome</name>
        <acronym>OAS</acronym>
        <description>A rare disorder presenting with ocular anomalies, ranging from mild microphthalmia to true anophthalmia, and limb anomalies. Limb malformations include fused 4th and 5th metacarpals and short 5th finger in hands, and oligodactyly in foot (four toes). Most patients have bilateral anophthalmia/ microphthalmia, but unilateral abnormality is also noted. Other malformations are rare, but venous or vertebral anomaly was recognized each in single cases.</description>
        <dbReference type="MIM" id="206920"/>
    </disease>
    <text>The disease is caused by variants affecting the gene represented in this entry.</text>
</comment>
<proteinExistence type="evidence at protein level"/>
<evidence type="ECO:0000250" key="1"/>
<evidence type="ECO:0000255" key="2"/>
<evidence type="ECO:0000255" key="3">
    <source>
        <dbReference type="PROSITE-ProRule" id="PRU00500"/>
    </source>
</evidence>
<evidence type="ECO:0000255" key="4">
    <source>
        <dbReference type="PROSITE-ProRule" id="PRU00798"/>
    </source>
</evidence>
<evidence type="ECO:0000255" key="5">
    <source>
        <dbReference type="PROSITE-ProRule" id="PRU10142"/>
    </source>
</evidence>
<evidence type="ECO:0000256" key="6">
    <source>
        <dbReference type="SAM" id="MobiDB-lite"/>
    </source>
</evidence>
<evidence type="ECO:0000269" key="7">
    <source>
    </source>
</evidence>
<evidence type="ECO:0000269" key="8">
    <source>
    </source>
</evidence>
<evidence type="ECO:0000269" key="9">
    <source>
    </source>
</evidence>
<evidence type="ECO:0000269" key="10">
    <source>
    </source>
</evidence>
<evidence type="ECO:0000269" key="11">
    <source>
    </source>
</evidence>
<evidence type="ECO:0000269" key="12">
    <source>
    </source>
</evidence>
<evidence type="ECO:0000303" key="13">
    <source>
    </source>
</evidence>
<evidence type="ECO:0000303" key="14">
    <source>
    </source>
</evidence>
<keyword id="KW-0025">Alternative splicing</keyword>
<keyword id="KW-0084">Basement membrane</keyword>
<keyword id="KW-0106">Calcium</keyword>
<keyword id="KW-0217">Developmental protein</keyword>
<keyword id="KW-0221">Differentiation</keyword>
<keyword id="KW-0225">Disease variant</keyword>
<keyword id="KW-1015">Disulfide bond</keyword>
<keyword id="KW-0272">Extracellular matrix</keyword>
<keyword id="KW-0325">Glycoprotein</keyword>
<keyword id="KW-0479">Metal-binding</keyword>
<keyword id="KW-1013">Microphthalmia</keyword>
<keyword id="KW-1267">Proteomics identification</keyword>
<keyword id="KW-1185">Reference proteome</keyword>
<keyword id="KW-0677">Repeat</keyword>
<keyword id="KW-0964">Secreted</keyword>
<keyword id="KW-0732">Signal</keyword>
<sequence>MLPARCARLLTPHLLLVLVQLSPARGHRTTGPRFLISDRDPQCNLHCSRTQPKPICASDGRSYESMCEYQRAKCRDPTLGVVHRGRCKDAGQSKCRLERAQALEQAKKPQEAVFVPECGEDGSFTQVQCHTYTGYCWCVTPDGKPISGSSVQNKTPVCSGSVTDKPLSQGNSGRKDDGSKPTPTMETQPVFDGDEITAPTLWIKHLVIKDSKLNNTNIRNSEKVYSCDQERQSALEEAQQNPREGIVIPECAPGGLYKPVQCHQSTGYCWCVLVDTGRPLPGTSTRYVMPSCESDARAKTTEADDPFKDRELPGCPEGKKMEFITSLLDALTTDMVQAINSAAPTGGGRFSEPDPSHTLEERVVHWYFSQLDSNSSNDINKREMKPFKRYVKKKAKPKKCARRFTDYCDLNKDKVISLPELKGCLGVSKEGRLV</sequence>
<reference key="1">
    <citation type="journal article" date="2002" name="J. Biol. Chem.">
        <title>Characterization of SMOC-1, a novel modular calcium-binding protein in basement membranes.</title>
        <authorList>
            <person name="Vannahme C."/>
            <person name="Smyth N."/>
            <person name="Miosge N."/>
            <person name="Goesling S."/>
            <person name="Frie C."/>
            <person name="Paulsson M."/>
            <person name="Maurer P."/>
            <person name="Hartmann U."/>
        </authorList>
    </citation>
    <scope>NUCLEOTIDE SEQUENCE [MRNA] (ISOFORM 1)</scope>
    <scope>TISSUE SPECIFICITY</scope>
    <scope>SUBCELLULAR LOCATION</scope>
    <scope>GLYCOSYLATION</scope>
    <source>
        <tissue>Fetal brain</tissue>
    </source>
</reference>
<reference key="2">
    <citation type="journal article" date="2004" name="Nat. Genet.">
        <title>Complete sequencing and characterization of 21,243 full-length human cDNAs.</title>
        <authorList>
            <person name="Ota T."/>
            <person name="Suzuki Y."/>
            <person name="Nishikawa T."/>
            <person name="Otsuki T."/>
            <person name="Sugiyama T."/>
            <person name="Irie R."/>
            <person name="Wakamatsu A."/>
            <person name="Hayashi K."/>
            <person name="Sato H."/>
            <person name="Nagai K."/>
            <person name="Kimura K."/>
            <person name="Makita H."/>
            <person name="Sekine M."/>
            <person name="Obayashi M."/>
            <person name="Nishi T."/>
            <person name="Shibahara T."/>
            <person name="Tanaka T."/>
            <person name="Ishii S."/>
            <person name="Yamamoto J."/>
            <person name="Saito K."/>
            <person name="Kawai Y."/>
            <person name="Isono Y."/>
            <person name="Nakamura Y."/>
            <person name="Nagahari K."/>
            <person name="Murakami K."/>
            <person name="Yasuda T."/>
            <person name="Iwayanagi T."/>
            <person name="Wagatsuma M."/>
            <person name="Shiratori A."/>
            <person name="Sudo H."/>
            <person name="Hosoiri T."/>
            <person name="Kaku Y."/>
            <person name="Kodaira H."/>
            <person name="Kondo H."/>
            <person name="Sugawara M."/>
            <person name="Takahashi M."/>
            <person name="Kanda K."/>
            <person name="Yokoi T."/>
            <person name="Furuya T."/>
            <person name="Kikkawa E."/>
            <person name="Omura Y."/>
            <person name="Abe K."/>
            <person name="Kamihara K."/>
            <person name="Katsuta N."/>
            <person name="Sato K."/>
            <person name="Tanikawa M."/>
            <person name="Yamazaki M."/>
            <person name="Ninomiya K."/>
            <person name="Ishibashi T."/>
            <person name="Yamashita H."/>
            <person name="Murakawa K."/>
            <person name="Fujimori K."/>
            <person name="Tanai H."/>
            <person name="Kimata M."/>
            <person name="Watanabe M."/>
            <person name="Hiraoka S."/>
            <person name="Chiba Y."/>
            <person name="Ishida S."/>
            <person name="Ono Y."/>
            <person name="Takiguchi S."/>
            <person name="Watanabe S."/>
            <person name="Yosida M."/>
            <person name="Hotuta T."/>
            <person name="Kusano J."/>
            <person name="Kanehori K."/>
            <person name="Takahashi-Fujii A."/>
            <person name="Hara H."/>
            <person name="Tanase T.-O."/>
            <person name="Nomura Y."/>
            <person name="Togiya S."/>
            <person name="Komai F."/>
            <person name="Hara R."/>
            <person name="Takeuchi K."/>
            <person name="Arita M."/>
            <person name="Imose N."/>
            <person name="Musashino K."/>
            <person name="Yuuki H."/>
            <person name="Oshima A."/>
            <person name="Sasaki N."/>
            <person name="Aotsuka S."/>
            <person name="Yoshikawa Y."/>
            <person name="Matsunawa H."/>
            <person name="Ichihara T."/>
            <person name="Shiohata N."/>
            <person name="Sano S."/>
            <person name="Moriya S."/>
            <person name="Momiyama H."/>
            <person name="Satoh N."/>
            <person name="Takami S."/>
            <person name="Terashima Y."/>
            <person name="Suzuki O."/>
            <person name="Nakagawa S."/>
            <person name="Senoh A."/>
            <person name="Mizoguchi H."/>
            <person name="Goto Y."/>
            <person name="Shimizu F."/>
            <person name="Wakebe H."/>
            <person name="Hishigaki H."/>
            <person name="Watanabe T."/>
            <person name="Sugiyama A."/>
            <person name="Takemoto M."/>
            <person name="Kawakami B."/>
            <person name="Yamazaki M."/>
            <person name="Watanabe K."/>
            <person name="Kumagai A."/>
            <person name="Itakura S."/>
            <person name="Fukuzumi Y."/>
            <person name="Fujimori Y."/>
            <person name="Komiyama M."/>
            <person name="Tashiro H."/>
            <person name="Tanigami A."/>
            <person name="Fujiwara T."/>
            <person name="Ono T."/>
            <person name="Yamada K."/>
            <person name="Fujii Y."/>
            <person name="Ozaki K."/>
            <person name="Hirao M."/>
            <person name="Ohmori Y."/>
            <person name="Kawabata A."/>
            <person name="Hikiji T."/>
            <person name="Kobatake N."/>
            <person name="Inagaki H."/>
            <person name="Ikema Y."/>
            <person name="Okamoto S."/>
            <person name="Okitani R."/>
            <person name="Kawakami T."/>
            <person name="Noguchi S."/>
            <person name="Itoh T."/>
            <person name="Shigeta K."/>
            <person name="Senba T."/>
            <person name="Matsumura K."/>
            <person name="Nakajima Y."/>
            <person name="Mizuno T."/>
            <person name="Morinaga M."/>
            <person name="Sasaki M."/>
            <person name="Togashi T."/>
            <person name="Oyama M."/>
            <person name="Hata H."/>
            <person name="Watanabe M."/>
            <person name="Komatsu T."/>
            <person name="Mizushima-Sugano J."/>
            <person name="Satoh T."/>
            <person name="Shirai Y."/>
            <person name="Takahashi Y."/>
            <person name="Nakagawa K."/>
            <person name="Okumura K."/>
            <person name="Nagase T."/>
            <person name="Nomura N."/>
            <person name="Kikuchi H."/>
            <person name="Masuho Y."/>
            <person name="Yamashita R."/>
            <person name="Nakai K."/>
            <person name="Yada T."/>
            <person name="Nakamura Y."/>
            <person name="Ohara O."/>
            <person name="Isogai T."/>
            <person name="Sugano S."/>
        </authorList>
    </citation>
    <scope>NUCLEOTIDE SEQUENCE [LARGE SCALE MRNA] (ISOFORMS 1 AND 2)</scope>
    <source>
        <tissue>Caudate nucleus</tissue>
    </source>
</reference>
<reference key="3">
    <citation type="journal article" date="2003" name="Nature">
        <title>The DNA sequence and analysis of human chromosome 14.</title>
        <authorList>
            <person name="Heilig R."/>
            <person name="Eckenberg R."/>
            <person name="Petit J.-L."/>
            <person name="Fonknechten N."/>
            <person name="Da Silva C."/>
            <person name="Cattolico L."/>
            <person name="Levy M."/>
            <person name="Barbe V."/>
            <person name="De Berardinis V."/>
            <person name="Ureta-Vidal A."/>
            <person name="Pelletier E."/>
            <person name="Vico V."/>
            <person name="Anthouard V."/>
            <person name="Rowen L."/>
            <person name="Madan A."/>
            <person name="Qin S."/>
            <person name="Sun H."/>
            <person name="Du H."/>
            <person name="Pepin K."/>
            <person name="Artiguenave F."/>
            <person name="Robert C."/>
            <person name="Cruaud C."/>
            <person name="Bruels T."/>
            <person name="Jaillon O."/>
            <person name="Friedlander L."/>
            <person name="Samson G."/>
            <person name="Brottier P."/>
            <person name="Cure S."/>
            <person name="Segurens B."/>
            <person name="Aniere F."/>
            <person name="Samain S."/>
            <person name="Crespeau H."/>
            <person name="Abbasi N."/>
            <person name="Aiach N."/>
            <person name="Boscus D."/>
            <person name="Dickhoff R."/>
            <person name="Dors M."/>
            <person name="Dubois I."/>
            <person name="Friedman C."/>
            <person name="Gouyvenoux M."/>
            <person name="James R."/>
            <person name="Madan A."/>
            <person name="Mairey-Estrada B."/>
            <person name="Mangenot S."/>
            <person name="Martins N."/>
            <person name="Menard M."/>
            <person name="Oztas S."/>
            <person name="Ratcliffe A."/>
            <person name="Shaffer T."/>
            <person name="Trask B."/>
            <person name="Vacherie B."/>
            <person name="Bellemere C."/>
            <person name="Belser C."/>
            <person name="Besnard-Gonnet M."/>
            <person name="Bartol-Mavel D."/>
            <person name="Boutard M."/>
            <person name="Briez-Silla S."/>
            <person name="Combette S."/>
            <person name="Dufosse-Laurent V."/>
            <person name="Ferron C."/>
            <person name="Lechaplais C."/>
            <person name="Louesse C."/>
            <person name="Muselet D."/>
            <person name="Magdelenat G."/>
            <person name="Pateau E."/>
            <person name="Petit E."/>
            <person name="Sirvain-Trukniewicz P."/>
            <person name="Trybou A."/>
            <person name="Vega-Czarny N."/>
            <person name="Bataille E."/>
            <person name="Bluet E."/>
            <person name="Bordelais I."/>
            <person name="Dubois M."/>
            <person name="Dumont C."/>
            <person name="Guerin T."/>
            <person name="Haffray S."/>
            <person name="Hammadi R."/>
            <person name="Muanga J."/>
            <person name="Pellouin V."/>
            <person name="Robert D."/>
            <person name="Wunderle E."/>
            <person name="Gauguet G."/>
            <person name="Roy A."/>
            <person name="Sainte-Marthe L."/>
            <person name="Verdier J."/>
            <person name="Verdier-Discala C."/>
            <person name="Hillier L.W."/>
            <person name="Fulton L."/>
            <person name="McPherson J."/>
            <person name="Matsuda F."/>
            <person name="Wilson R."/>
            <person name="Scarpelli C."/>
            <person name="Gyapay G."/>
            <person name="Wincker P."/>
            <person name="Saurin W."/>
            <person name="Quetier F."/>
            <person name="Waterston R."/>
            <person name="Hood L."/>
            <person name="Weissenbach J."/>
        </authorList>
    </citation>
    <scope>NUCLEOTIDE SEQUENCE [LARGE SCALE GENOMIC DNA]</scope>
</reference>
<reference key="4">
    <citation type="submission" date="2005-07" db="EMBL/GenBank/DDBJ databases">
        <authorList>
            <person name="Mural R.J."/>
            <person name="Istrail S."/>
            <person name="Sutton G.G."/>
            <person name="Florea L."/>
            <person name="Halpern A.L."/>
            <person name="Mobarry C.M."/>
            <person name="Lippert R."/>
            <person name="Walenz B."/>
            <person name="Shatkay H."/>
            <person name="Dew I."/>
            <person name="Miller J.R."/>
            <person name="Flanigan M.J."/>
            <person name="Edwards N.J."/>
            <person name="Bolanos R."/>
            <person name="Fasulo D."/>
            <person name="Halldorsson B.V."/>
            <person name="Hannenhalli S."/>
            <person name="Turner R."/>
            <person name="Yooseph S."/>
            <person name="Lu F."/>
            <person name="Nusskern D.R."/>
            <person name="Shue B.C."/>
            <person name="Zheng X.H."/>
            <person name="Zhong F."/>
            <person name="Delcher A.L."/>
            <person name="Huson D.H."/>
            <person name="Kravitz S.A."/>
            <person name="Mouchard L."/>
            <person name="Reinert K."/>
            <person name="Remington K.A."/>
            <person name="Clark A.G."/>
            <person name="Waterman M.S."/>
            <person name="Eichler E.E."/>
            <person name="Adams M.D."/>
            <person name="Hunkapiller M.W."/>
            <person name="Myers E.W."/>
            <person name="Venter J.C."/>
        </authorList>
    </citation>
    <scope>NUCLEOTIDE SEQUENCE [LARGE SCALE GENOMIC DNA]</scope>
</reference>
<reference key="5">
    <citation type="journal article" date="2004" name="Genome Res.">
        <title>The status, quality, and expansion of the NIH full-length cDNA project: the Mammalian Gene Collection (MGC).</title>
        <authorList>
            <consortium name="The MGC Project Team"/>
        </authorList>
    </citation>
    <scope>NUCLEOTIDE SEQUENCE [LARGE SCALE MRNA] (ISOFORM 2)</scope>
    <source>
        <tissue>Brain</tissue>
        <tissue>Lung</tissue>
    </source>
</reference>
<reference key="6">
    <citation type="journal article" date="2010" name="J. Proteome Res.">
        <title>Secretome analysis of human BMSCs and identification of SMOC1 as an important ECM protein in osteoblast differentiation.</title>
        <authorList>
            <person name="Choi Y.A."/>
            <person name="Lim J."/>
            <person name="Kim K.M."/>
            <person name="Acharya B."/>
            <person name="Cho J.Y."/>
            <person name="Bae Y.C."/>
            <person name="Shin H.I."/>
            <person name="Kim S.Y."/>
            <person name="Park E.K."/>
        </authorList>
    </citation>
    <scope>FUNCTION AS REGULATOR OF OSTEOBLAST DIFFERENTIATION</scope>
    <scope>SUBCELLULAR LOCATION</scope>
    <scope>IDENTIFICATION BY MASS SPECTROMETRY</scope>
</reference>
<reference key="7">
    <citation type="journal article" date="2011" name="Am. J. Hum. Genet.">
        <title>SMOC1 is essential for ocular and limb development in humans and mice.</title>
        <authorList>
            <person name="Okada I."/>
            <person name="Hamanoue H."/>
            <person name="Terada K."/>
            <person name="Tohma T."/>
            <person name="Megarbane A."/>
            <person name="Chouery E."/>
            <person name="Abou-Ghoch J."/>
            <person name="Jalkh N."/>
            <person name="Cogulu O."/>
            <person name="Ozkinay F."/>
            <person name="Horie K."/>
            <person name="Takeda J."/>
            <person name="Furuichi T."/>
            <person name="Ikegawa S."/>
            <person name="Nishiyama K."/>
            <person name="Miyatake S."/>
            <person name="Nishimura A."/>
            <person name="Mizuguchi T."/>
            <person name="Niikawa N."/>
            <person name="Hirahara F."/>
            <person name="Kaname T."/>
            <person name="Yoshiura K."/>
            <person name="Tsurusaki Y."/>
            <person name="Doi H."/>
            <person name="Miyake N."/>
            <person name="Furukawa T."/>
            <person name="Matsumoto N."/>
            <person name="Saitsu H."/>
        </authorList>
    </citation>
    <scope>FUNCTION</scope>
    <scope>INVOLVEMENT IN OAS</scope>
</reference>
<reference key="8">
    <citation type="journal article" date="2011" name="Am. J. Hum. Genet.">
        <title>Mutations in the SPARC-related modular calcium-binding protein 1 gene, SMOC1, cause waardenburg anophthalmia syndrome.</title>
        <authorList>
            <person name="Abouzeid H."/>
            <person name="Boisset G."/>
            <person name="Favez T."/>
            <person name="Youssef M."/>
            <person name="Marzouk I."/>
            <person name="Shakankiry N."/>
            <person name="Bayoumi N."/>
            <person name="Descombes P."/>
            <person name="Agosti C."/>
            <person name="Munier F.L."/>
            <person name="Schorderet D.F."/>
        </authorList>
    </citation>
    <scope>FUNCTION</scope>
    <scope>INVOLVEMENT IN OAS</scope>
</reference>
<reference key="9">
    <citation type="journal article" date="2011" name="PLoS Genet.">
        <title>Loss of the BMP antagonist, SMOC-1, causes Ophthalmo-acromelic (Waardenburg Anophthalmia) syndrome in humans and mice.</title>
        <authorList>
            <person name="Rainger J."/>
            <person name="van Beusekom E."/>
            <person name="Ramsay J.K."/>
            <person name="McKie L."/>
            <person name="Al-Gazali L."/>
            <person name="Pallotta R."/>
            <person name="Saponari A."/>
            <person name="Branney P."/>
            <person name="Fisher M."/>
            <person name="Morrison H."/>
            <person name="Bicknell L."/>
            <person name="Gautier P."/>
            <person name="Perry P."/>
            <person name="Sokhi K."/>
            <person name="Sexton D."/>
            <person name="Bardakjian T.M."/>
            <person name="Schneider A.S."/>
            <person name="Elcioglu N."/>
            <person name="Ozkinay F."/>
            <person name="Koenig R."/>
            <person name="Megarbane A."/>
            <person name="Semerci C.N."/>
            <person name="Khan A."/>
            <person name="Zafar S."/>
            <person name="Hennekam R."/>
            <person name="Sousa S.B."/>
            <person name="Ramos L."/>
            <person name="Garavelli L."/>
            <person name="Furga A.S."/>
            <person name="Wischmeijer A."/>
            <person name="Jackson I.J."/>
            <person name="Gillessen-Kaesbach G."/>
            <person name="Brunner H.G."/>
            <person name="Wieczorek D."/>
            <person name="van Bokhoven H."/>
            <person name="Fitzpatrick D.R."/>
        </authorList>
    </citation>
    <scope>VARIANTS OAS CYS-278 AND ASN-283</scope>
</reference>
<reference key="10">
    <citation type="journal article" date="2013" name="Clin. Genet.">
        <title>Mutations in ALDH1A3 cause Microphthalmia.</title>
        <authorList>
            <person name="Aldahmesh M.A."/>
            <person name="Khan A.O."/>
            <person name="Hijazi H."/>
            <person name="Alkuraya F.S."/>
        </authorList>
    </citation>
    <scope>VARIANT OAS HIS-286</scope>
</reference>
<organism>
    <name type="scientific">Homo sapiens</name>
    <name type="common">Human</name>
    <dbReference type="NCBI Taxonomy" id="9606"/>
    <lineage>
        <taxon>Eukaryota</taxon>
        <taxon>Metazoa</taxon>
        <taxon>Chordata</taxon>
        <taxon>Craniata</taxon>
        <taxon>Vertebrata</taxon>
        <taxon>Euteleostomi</taxon>
        <taxon>Mammalia</taxon>
        <taxon>Eutheria</taxon>
        <taxon>Euarchontoglires</taxon>
        <taxon>Primates</taxon>
        <taxon>Haplorrhini</taxon>
        <taxon>Catarrhini</taxon>
        <taxon>Hominidae</taxon>
        <taxon>Homo</taxon>
    </lineage>
</organism>
<feature type="signal peptide" evidence="2">
    <location>
        <begin position="1"/>
        <end position="26"/>
    </location>
</feature>
<feature type="chain" id="PRO_0000020316" description="SPARC-related modular calcium-binding protein 1">
    <location>
        <begin position="27"/>
        <end position="434"/>
    </location>
</feature>
<feature type="domain" description="Kazal-like" evidence="4">
    <location>
        <begin position="37"/>
        <end position="89"/>
    </location>
</feature>
<feature type="domain" description="Thyroglobulin type-1 1" evidence="3">
    <location>
        <begin position="92"/>
        <end position="158"/>
    </location>
</feature>
<feature type="domain" description="Thyroglobulin type-1 2" evidence="3">
    <location>
        <begin position="224"/>
        <end position="292"/>
    </location>
</feature>
<feature type="domain" description="EF-hand 1">
    <location>
        <begin position="359"/>
        <end position="394"/>
    </location>
</feature>
<feature type="domain" description="EF-hand 2">
    <location>
        <begin position="396"/>
        <end position="431"/>
    </location>
</feature>
<feature type="region of interest" description="Disordered" evidence="6">
    <location>
        <begin position="149"/>
        <end position="191"/>
    </location>
</feature>
<feature type="compositionally biased region" description="Polar residues" evidence="6">
    <location>
        <begin position="149"/>
        <end position="172"/>
    </location>
</feature>
<feature type="binding site" evidence="5">
    <location>
        <position position="372"/>
    </location>
    <ligand>
        <name>Ca(2+)</name>
        <dbReference type="ChEBI" id="CHEBI:29108"/>
        <label>1</label>
    </ligand>
</feature>
<feature type="binding site" evidence="5">
    <location>
        <position position="374"/>
    </location>
    <ligand>
        <name>Ca(2+)</name>
        <dbReference type="ChEBI" id="CHEBI:29108"/>
        <label>1</label>
    </ligand>
</feature>
<feature type="binding site" evidence="5">
    <location>
        <position position="376"/>
    </location>
    <ligand>
        <name>Ca(2+)</name>
        <dbReference type="ChEBI" id="CHEBI:29108"/>
        <label>1</label>
    </ligand>
</feature>
<feature type="binding site" evidence="5">
    <location>
        <position position="378"/>
    </location>
    <ligand>
        <name>Ca(2+)</name>
        <dbReference type="ChEBI" id="CHEBI:29108"/>
        <label>1</label>
    </ligand>
</feature>
<feature type="binding site" evidence="5">
    <location>
        <position position="383"/>
    </location>
    <ligand>
        <name>Ca(2+)</name>
        <dbReference type="ChEBI" id="CHEBI:29108"/>
        <label>1</label>
    </ligand>
</feature>
<feature type="binding site" evidence="5">
    <location>
        <position position="409"/>
    </location>
    <ligand>
        <name>Ca(2+)</name>
        <dbReference type="ChEBI" id="CHEBI:29108"/>
        <label>2</label>
    </ligand>
</feature>
<feature type="binding site" evidence="5">
    <location>
        <position position="411"/>
    </location>
    <ligand>
        <name>Ca(2+)</name>
        <dbReference type="ChEBI" id="CHEBI:29108"/>
        <label>2</label>
    </ligand>
</feature>
<feature type="binding site" evidence="5">
    <location>
        <position position="413"/>
    </location>
    <ligand>
        <name>Ca(2+)</name>
        <dbReference type="ChEBI" id="CHEBI:29108"/>
        <label>2</label>
    </ligand>
</feature>
<feature type="binding site" evidence="5">
    <location>
        <position position="420"/>
    </location>
    <ligand>
        <name>Ca(2+)</name>
        <dbReference type="ChEBI" id="CHEBI:29108"/>
        <label>2</label>
    </ligand>
</feature>
<feature type="glycosylation site" description="N-linked (GlcNAc...) asparagine" evidence="2">
    <location>
        <position position="214"/>
    </location>
</feature>
<feature type="glycosylation site" description="N-linked (GlcNAc...) asparagine" evidence="2">
    <location>
        <position position="374"/>
    </location>
</feature>
<feature type="disulfide bond" evidence="4">
    <location>
        <begin position="43"/>
        <end position="74"/>
    </location>
</feature>
<feature type="disulfide bond" evidence="4">
    <location>
        <begin position="47"/>
        <end position="67"/>
    </location>
</feature>
<feature type="disulfide bond" evidence="4">
    <location>
        <begin position="56"/>
        <end position="87"/>
    </location>
</feature>
<feature type="disulfide bond" evidence="1">
    <location>
        <begin position="95"/>
        <end position="118"/>
    </location>
</feature>
<feature type="disulfide bond" evidence="1">
    <location>
        <begin position="129"/>
        <end position="136"/>
    </location>
</feature>
<feature type="disulfide bond" evidence="1">
    <location>
        <begin position="138"/>
        <end position="158"/>
    </location>
</feature>
<feature type="disulfide bond" evidence="1">
    <location>
        <begin position="227"/>
        <end position="251"/>
    </location>
</feature>
<feature type="disulfide bond" evidence="1">
    <location>
        <begin position="262"/>
        <end position="269"/>
    </location>
</feature>
<feature type="disulfide bond" evidence="1">
    <location>
        <begin position="271"/>
        <end position="292"/>
    </location>
</feature>
<feature type="splice variant" id="VSP_008720" description="In isoform 2." evidence="13 14">
    <original>E</original>
    <variation>EV</variation>
    <location>
        <position position="430"/>
    </location>
</feature>
<feature type="sequence variant" id="VAR_034498" description="In dbSNP:rs10150925.">
    <original>V</original>
    <variation>M</variation>
    <location>
        <position position="82"/>
    </location>
</feature>
<feature type="sequence variant" id="VAR_069326" description="In OAS; dbSNP:rs776638586." evidence="11">
    <original>R</original>
    <variation>C</variation>
    <location>
        <position position="278"/>
    </location>
</feature>
<feature type="sequence variant" id="VAR_069327" description="In OAS." evidence="11">
    <original>T</original>
    <variation>N</variation>
    <location>
        <position position="283"/>
    </location>
</feature>
<feature type="sequence variant" id="VAR_069328" description="In OAS; dbSNP:rs1365818420." evidence="12">
    <original>R</original>
    <variation>H</variation>
    <location>
        <position position="286"/>
    </location>
</feature>
<gene>
    <name type="primary">SMOC1</name>
</gene>
<protein>
    <recommendedName>
        <fullName>SPARC-related modular calcium-binding protein 1</fullName>
    </recommendedName>
    <alternativeName>
        <fullName>Secreted modular calcium-binding protein 1</fullName>
        <shortName>SMOC-1</shortName>
    </alternativeName>
</protein>